<comment type="function">
    <text evidence="1">Involved in phosphonate degradation.</text>
</comment>
<comment type="catalytic activity">
    <reaction evidence="1">
        <text>phosphonoacetaldehyde + H2O = acetaldehyde + phosphate + H(+)</text>
        <dbReference type="Rhea" id="RHEA:18905"/>
        <dbReference type="ChEBI" id="CHEBI:15343"/>
        <dbReference type="ChEBI" id="CHEBI:15377"/>
        <dbReference type="ChEBI" id="CHEBI:15378"/>
        <dbReference type="ChEBI" id="CHEBI:43474"/>
        <dbReference type="ChEBI" id="CHEBI:58383"/>
        <dbReference type="EC" id="3.11.1.1"/>
    </reaction>
</comment>
<comment type="cofactor">
    <cofactor evidence="1">
        <name>Mg(2+)</name>
        <dbReference type="ChEBI" id="CHEBI:18420"/>
    </cofactor>
    <text evidence="1">Binds 1 Mg(2+) ion per subunit.</text>
</comment>
<comment type="subunit">
    <text evidence="1">Homodimer.</text>
</comment>
<comment type="similarity">
    <text evidence="1">Belongs to the HAD-like hydrolase superfamily. PhnX family.</text>
</comment>
<comment type="caution">
    <text evidence="2">The first enzyme involved in phosphonate degradation (PhnW, EC 2.6.1.37) is not found in this organism. The function of this enzyme is therefore uncertain.</text>
</comment>
<organism>
    <name type="scientific">Latilactobacillus sakei subsp. sakei (strain 23K)</name>
    <name type="common">Lactobacillus sakei subsp. sakei</name>
    <dbReference type="NCBI Taxonomy" id="314315"/>
    <lineage>
        <taxon>Bacteria</taxon>
        <taxon>Bacillati</taxon>
        <taxon>Bacillota</taxon>
        <taxon>Bacilli</taxon>
        <taxon>Lactobacillales</taxon>
        <taxon>Lactobacillaceae</taxon>
        <taxon>Latilactobacillus</taxon>
    </lineage>
</organism>
<dbReference type="EC" id="3.11.1.1" evidence="1"/>
<dbReference type="EMBL" id="CR936503">
    <property type="protein sequence ID" value="CAI55972.1"/>
    <property type="molecule type" value="Genomic_DNA"/>
</dbReference>
<dbReference type="RefSeq" id="WP_011375357.1">
    <property type="nucleotide sequence ID" value="NC_007576.1"/>
</dbReference>
<dbReference type="SMR" id="Q38V12"/>
<dbReference type="STRING" id="314315.LCA_1665"/>
<dbReference type="KEGG" id="lsa:LCA_1665"/>
<dbReference type="eggNOG" id="COG0637">
    <property type="taxonomic scope" value="Bacteria"/>
</dbReference>
<dbReference type="HOGENOM" id="CLU_045011_12_0_9"/>
<dbReference type="OrthoDB" id="5504491at2"/>
<dbReference type="Proteomes" id="UP000002707">
    <property type="component" value="Chromosome"/>
</dbReference>
<dbReference type="GO" id="GO:0005829">
    <property type="term" value="C:cytosol"/>
    <property type="evidence" value="ECO:0007669"/>
    <property type="project" value="TreeGrafter"/>
</dbReference>
<dbReference type="GO" id="GO:0000287">
    <property type="term" value="F:magnesium ion binding"/>
    <property type="evidence" value="ECO:0007669"/>
    <property type="project" value="UniProtKB-UniRule"/>
</dbReference>
<dbReference type="GO" id="GO:0008967">
    <property type="term" value="F:phosphoglycolate phosphatase activity"/>
    <property type="evidence" value="ECO:0007669"/>
    <property type="project" value="TreeGrafter"/>
</dbReference>
<dbReference type="GO" id="GO:0050194">
    <property type="term" value="F:phosphonoacetaldehyde hydrolase activity"/>
    <property type="evidence" value="ECO:0007669"/>
    <property type="project" value="UniProtKB-UniRule"/>
</dbReference>
<dbReference type="GO" id="GO:0006281">
    <property type="term" value="P:DNA repair"/>
    <property type="evidence" value="ECO:0007669"/>
    <property type="project" value="TreeGrafter"/>
</dbReference>
<dbReference type="GO" id="GO:0019700">
    <property type="term" value="P:organic phosphonate catabolic process"/>
    <property type="evidence" value="ECO:0007669"/>
    <property type="project" value="InterPro"/>
</dbReference>
<dbReference type="CDD" id="cd02586">
    <property type="entry name" value="HAD_PHN"/>
    <property type="match status" value="1"/>
</dbReference>
<dbReference type="Gene3D" id="3.40.50.1000">
    <property type="entry name" value="HAD superfamily/HAD-like"/>
    <property type="match status" value="1"/>
</dbReference>
<dbReference type="Gene3D" id="1.10.150.240">
    <property type="entry name" value="Putative phosphatase, domain 2"/>
    <property type="match status" value="1"/>
</dbReference>
<dbReference type="HAMAP" id="MF_01375">
    <property type="entry name" value="PhnX"/>
    <property type="match status" value="1"/>
</dbReference>
<dbReference type="InterPro" id="IPR050155">
    <property type="entry name" value="HAD-like_hydrolase_sf"/>
</dbReference>
<dbReference type="InterPro" id="IPR036412">
    <property type="entry name" value="HAD-like_sf"/>
</dbReference>
<dbReference type="InterPro" id="IPR023214">
    <property type="entry name" value="HAD_sf"/>
</dbReference>
<dbReference type="InterPro" id="IPR023198">
    <property type="entry name" value="PGP-like_dom2"/>
</dbReference>
<dbReference type="InterPro" id="IPR006323">
    <property type="entry name" value="Phosphonoacetald_hydro"/>
</dbReference>
<dbReference type="NCBIfam" id="TIGR01422">
    <property type="entry name" value="phosphonatase"/>
    <property type="match status" value="1"/>
</dbReference>
<dbReference type="PANTHER" id="PTHR43434">
    <property type="entry name" value="PHOSPHOGLYCOLATE PHOSPHATASE"/>
    <property type="match status" value="1"/>
</dbReference>
<dbReference type="PANTHER" id="PTHR43434:SF19">
    <property type="entry name" value="PHOSPHONOACETALDEHYDE HYDROLASE"/>
    <property type="match status" value="1"/>
</dbReference>
<dbReference type="Pfam" id="PF00702">
    <property type="entry name" value="Hydrolase"/>
    <property type="match status" value="1"/>
</dbReference>
<dbReference type="SFLD" id="SFLDG01135">
    <property type="entry name" value="C1.5.6:_HAD__Beta-PGM__Phospha"/>
    <property type="match status" value="1"/>
</dbReference>
<dbReference type="SFLD" id="SFLDS00003">
    <property type="entry name" value="Haloacid_Dehalogenase"/>
    <property type="match status" value="1"/>
</dbReference>
<dbReference type="SUPFAM" id="SSF56784">
    <property type="entry name" value="HAD-like"/>
    <property type="match status" value="1"/>
</dbReference>
<name>PHNX_LATSS</name>
<evidence type="ECO:0000255" key="1">
    <source>
        <dbReference type="HAMAP-Rule" id="MF_01375"/>
    </source>
</evidence>
<evidence type="ECO:0000305" key="2"/>
<proteinExistence type="inferred from homology"/>
<gene>
    <name evidence="1" type="primary">phnX</name>
    <name type="ordered locus">LCA_1665</name>
</gene>
<reference key="1">
    <citation type="journal article" date="2005" name="Nat. Biotechnol.">
        <title>The complete genome sequence of the meat-borne lactic acid bacterium Lactobacillus sakei 23K.</title>
        <authorList>
            <person name="Chaillou S."/>
            <person name="Champomier-Verges M.-C."/>
            <person name="Cornet M."/>
            <person name="Crutz-Le Coq A.-M."/>
            <person name="Dudez A.-M."/>
            <person name="Martin V."/>
            <person name="Beaufils S."/>
            <person name="Darbon-Rongere E."/>
            <person name="Bossy R."/>
            <person name="Loux V."/>
            <person name="Zagorec M."/>
        </authorList>
    </citation>
    <scope>NUCLEOTIDE SEQUENCE [LARGE SCALE GENOMIC DNA]</scope>
    <source>
        <strain>23K</strain>
    </source>
</reference>
<accession>Q38V12</accession>
<protein>
    <recommendedName>
        <fullName evidence="1">Phosphonoacetaldehyde hydrolase</fullName>
        <shortName evidence="1">Phosphonatase</shortName>
        <ecNumber evidence="1">3.11.1.1</ecNumber>
    </recommendedName>
    <alternativeName>
        <fullName evidence="1">Phosphonoacetaldehyde phosphonohydrolase</fullName>
    </alternativeName>
</protein>
<feature type="chain" id="PRO_0000284590" description="Phosphonoacetaldehyde hydrolase">
    <location>
        <begin position="1"/>
        <end position="265"/>
    </location>
</feature>
<feature type="active site" description="Nucleophile" evidence="1">
    <location>
        <position position="10"/>
    </location>
</feature>
<feature type="active site" description="Schiff-base intermediate with substrate" evidence="1">
    <location>
        <position position="51"/>
    </location>
</feature>
<feature type="binding site" evidence="1">
    <location>
        <position position="10"/>
    </location>
    <ligand>
        <name>Mg(2+)</name>
        <dbReference type="ChEBI" id="CHEBI:18420"/>
    </ligand>
</feature>
<feature type="binding site" evidence="1">
    <location>
        <position position="12"/>
    </location>
    <ligand>
        <name>Mg(2+)</name>
        <dbReference type="ChEBI" id="CHEBI:18420"/>
    </ligand>
</feature>
<feature type="binding site" evidence="1">
    <location>
        <position position="184"/>
    </location>
    <ligand>
        <name>Mg(2+)</name>
        <dbReference type="ChEBI" id="CHEBI:18420"/>
    </ligand>
</feature>
<sequence length="265" mass="29202">MTDIQCVIFDWAGTIIDFGSLDPVLAFQSAFNAAGIQIDTDRIRQDMGIEKHEHIAKLAKMPEVQRAWFAKYKRGITDADQLQLFNYFEQFLLNRLSTETTLTPAVLQVQTYLKAHHIHIATTTGYTKAMLAIAAKQAGLLGYHPELMVSKEDVAAGRPAPDMINHIMTAFNITDPQTVVKVGDTVIDMQEGKNAGVLTVGLIESSSLLGLSQAKLIDLPQKTRLAKFAEITKTLKAAGADYVIHNLSELPAILAKYQTPQKEHA</sequence>
<keyword id="KW-0378">Hydrolase</keyword>
<keyword id="KW-0460">Magnesium</keyword>
<keyword id="KW-0479">Metal-binding</keyword>
<keyword id="KW-1185">Reference proteome</keyword>
<keyword id="KW-0704">Schiff base</keyword>